<comment type="function">
    <text evidence="1">Core subunit of the mitochondrial membrane respiratory chain NADH dehydrogenase (Complex I) that is believed to belong to the minimal assembly required for catalysis. Complex I functions in the transfer of electrons from NADH to the respiratory chain. The immediate electron acceptor for the enzyme is believed to be ubiquinone (By similarity).</text>
</comment>
<comment type="catalytic activity">
    <reaction>
        <text>a ubiquinone + NADH + 5 H(+)(in) = a ubiquinol + NAD(+) + 4 H(+)(out)</text>
        <dbReference type="Rhea" id="RHEA:29091"/>
        <dbReference type="Rhea" id="RHEA-COMP:9565"/>
        <dbReference type="Rhea" id="RHEA-COMP:9566"/>
        <dbReference type="ChEBI" id="CHEBI:15378"/>
        <dbReference type="ChEBI" id="CHEBI:16389"/>
        <dbReference type="ChEBI" id="CHEBI:17976"/>
        <dbReference type="ChEBI" id="CHEBI:57540"/>
        <dbReference type="ChEBI" id="CHEBI:57945"/>
        <dbReference type="EC" id="7.1.1.2"/>
    </reaction>
</comment>
<comment type="subcellular location">
    <subcellularLocation>
        <location evidence="1">Mitochondrion inner membrane</location>
        <topology evidence="1">Multi-pass membrane protein</topology>
    </subcellularLocation>
</comment>
<comment type="similarity">
    <text evidence="3">Belongs to the complex I subunit 5 family.</text>
</comment>
<feature type="chain" id="PRO_0000118160" description="NADH-ubiquinone oxidoreductase chain 5">
    <location>
        <begin position="1"/>
        <end position="670"/>
    </location>
</feature>
<feature type="transmembrane region" description="Helical" evidence="2">
    <location>
        <begin position="3"/>
        <end position="23"/>
    </location>
</feature>
<feature type="transmembrane region" description="Helical" evidence="2">
    <location>
        <begin position="36"/>
        <end position="56"/>
    </location>
</feature>
<feature type="transmembrane region" description="Helical" evidence="2">
    <location>
        <begin position="76"/>
        <end position="96"/>
    </location>
</feature>
<feature type="transmembrane region" description="Helical" evidence="2">
    <location>
        <begin position="113"/>
        <end position="133"/>
    </location>
</feature>
<feature type="transmembrane region" description="Helical" evidence="2">
    <location>
        <begin position="136"/>
        <end position="156"/>
    </location>
</feature>
<feature type="transmembrane region" description="Helical" evidence="2">
    <location>
        <begin position="178"/>
        <end position="198"/>
    </location>
</feature>
<feature type="transmembrane region" description="Helical" evidence="2">
    <location>
        <begin position="218"/>
        <end position="238"/>
    </location>
</feature>
<feature type="transmembrane region" description="Helical" evidence="2">
    <location>
        <begin position="250"/>
        <end position="270"/>
    </location>
</feature>
<feature type="transmembrane region" description="Helical" evidence="2">
    <location>
        <begin position="283"/>
        <end position="303"/>
    </location>
</feature>
<feature type="transmembrane region" description="Helical" evidence="2">
    <location>
        <begin position="319"/>
        <end position="339"/>
    </location>
</feature>
<feature type="transmembrane region" description="Helical" evidence="2">
    <location>
        <begin position="340"/>
        <end position="360"/>
    </location>
</feature>
<feature type="transmembrane region" description="Helical" evidence="2">
    <location>
        <begin position="375"/>
        <end position="395"/>
    </location>
</feature>
<feature type="transmembrane region" description="Helical" evidence="2">
    <location>
        <begin position="425"/>
        <end position="445"/>
    </location>
</feature>
<feature type="transmembrane region" description="Helical" evidence="2">
    <location>
        <begin position="461"/>
        <end position="481"/>
    </location>
</feature>
<feature type="transmembrane region" description="Helical" evidence="2">
    <location>
        <begin position="618"/>
        <end position="638"/>
    </location>
</feature>
<name>NU5M_WHEAT</name>
<protein>
    <recommendedName>
        <fullName>NADH-ubiquinone oxidoreductase chain 5</fullName>
        <ecNumber>7.1.1.2</ecNumber>
    </recommendedName>
    <alternativeName>
        <fullName>NADH dehydrogenase subunit 5</fullName>
    </alternativeName>
</protein>
<keyword id="KW-0249">Electron transport</keyword>
<keyword id="KW-0472">Membrane</keyword>
<keyword id="KW-0496">Mitochondrion</keyword>
<keyword id="KW-0999">Mitochondrion inner membrane</keyword>
<keyword id="KW-0520">NAD</keyword>
<keyword id="KW-1185">Reference proteome</keyword>
<keyword id="KW-0679">Respiratory chain</keyword>
<keyword id="KW-1278">Translocase</keyword>
<keyword id="KW-0812">Transmembrane</keyword>
<keyword id="KW-1133">Transmembrane helix</keyword>
<keyword id="KW-0813">Transport</keyword>
<keyword id="KW-0830">Ubiquinone</keyword>
<proteinExistence type="inferred from homology"/>
<sequence>MYLLIVFLPLLGSSVAGFFGRFLGSEGTAIMTTTCVSFSSILSLIAFYEVALGASACYLRIAPWISSEMFDASWGFLFDSLTVVMLIVVTFISSLVHLYSISYMSEDPHSPRFMCYLSIFTFFMLMLVTGDNFLQLFLGWEGVGLASYLLIHFWFTRLQADKAAIKAMLVNRVGDFGLALGIFGCFTLFQTVDFSTIFACASAPRNEWIFCNMRLNAITLICILLFIGAVGKSAQIGLHTWLPDAMEGPTPVSALIHAATMVTAGVFMIARCSPLFEYSPTALIVITFAGAMTSFLAATTGILQNDLKRVIAYSTCSQLGYMIFACGISNYSVSVFHLMNHAFFKALLFLSAGSVIHAMSDEQDMRKMGGLASSFPLTYAMMLMGSLSLIGFPFLTGFYSKDVILELAYTKYTISGNFAFWLGSVSVLFTSYYSFRLLFLTFLVPTNSFGRDRLRCHDAPIPMAIPLILLALGSLFVGYLAKDMMIGLGTNFWANSPFVLPKNEILAESEFAAPTITKLIPILFSTSGASLAYNVNLVADQFQRAFQTSTFCNRLYSFFNKRWFFDQVLNDFLVRSFLRFGYSVSFEALDKGAIEILGPYGISYTFRRLAERISQLQSGSVYHYAFAMLLGSTPFVTFSRMWDSLSSWVDSRSSFILLVSSFLINKSSQE</sequence>
<dbReference type="EC" id="7.1.1.2"/>
<dbReference type="EMBL" id="M74159">
    <property type="protein sequence ID" value="AAA32142.2"/>
    <property type="molecule type" value="Genomic_DNA"/>
</dbReference>
<dbReference type="EMBL" id="M74157">
    <property type="protein sequence ID" value="AAA32142.2"/>
    <property type="status" value="JOINED"/>
    <property type="molecule type" value="Genomic_DNA"/>
</dbReference>
<dbReference type="EMBL" id="M74158">
    <property type="protein sequence ID" value="AAA32142.2"/>
    <property type="status" value="JOINED"/>
    <property type="molecule type" value="Genomic_DNA"/>
</dbReference>
<dbReference type="PIR" id="JQ1447">
    <property type="entry name" value="JQ1447"/>
</dbReference>
<dbReference type="SMR" id="Q37680"/>
<dbReference type="PaxDb" id="4565-EPlTAEP00000010100"/>
<dbReference type="eggNOG" id="KOG4668">
    <property type="taxonomic scope" value="Eukaryota"/>
</dbReference>
<dbReference type="Proteomes" id="UP000019116">
    <property type="component" value="Unplaced"/>
</dbReference>
<dbReference type="ExpressionAtlas" id="Q37680">
    <property type="expression patterns" value="differential"/>
</dbReference>
<dbReference type="GO" id="GO:0005743">
    <property type="term" value="C:mitochondrial inner membrane"/>
    <property type="evidence" value="ECO:0007669"/>
    <property type="project" value="UniProtKB-SubCell"/>
</dbReference>
<dbReference type="GO" id="GO:0009536">
    <property type="term" value="C:plastid"/>
    <property type="evidence" value="ECO:0007669"/>
    <property type="project" value="UniProtKB-ARBA"/>
</dbReference>
<dbReference type="GO" id="GO:0008137">
    <property type="term" value="F:NADH dehydrogenase (ubiquinone) activity"/>
    <property type="evidence" value="ECO:0007669"/>
    <property type="project" value="UniProtKB-EC"/>
</dbReference>
<dbReference type="GO" id="GO:0042773">
    <property type="term" value="P:ATP synthesis coupled electron transport"/>
    <property type="evidence" value="ECO:0007669"/>
    <property type="project" value="InterPro"/>
</dbReference>
<dbReference type="Gene3D" id="1.20.5.2700">
    <property type="match status" value="1"/>
</dbReference>
<dbReference type="InterPro" id="IPR018393">
    <property type="entry name" value="NADHpl_OxRdtase_5_subgr"/>
</dbReference>
<dbReference type="InterPro" id="IPR001750">
    <property type="entry name" value="ND/Mrp_TM"/>
</dbReference>
<dbReference type="InterPro" id="IPR003945">
    <property type="entry name" value="NU5C-like"/>
</dbReference>
<dbReference type="InterPro" id="IPR001516">
    <property type="entry name" value="Proton_antipo_N"/>
</dbReference>
<dbReference type="NCBIfam" id="TIGR01974">
    <property type="entry name" value="NDH_I_L"/>
    <property type="match status" value="1"/>
</dbReference>
<dbReference type="NCBIfam" id="NF005141">
    <property type="entry name" value="PRK06590.1"/>
    <property type="match status" value="1"/>
</dbReference>
<dbReference type="PANTHER" id="PTHR42829">
    <property type="entry name" value="NADH-UBIQUINONE OXIDOREDUCTASE CHAIN 5"/>
    <property type="match status" value="1"/>
</dbReference>
<dbReference type="PANTHER" id="PTHR42829:SF2">
    <property type="entry name" value="NADH-UBIQUINONE OXIDOREDUCTASE CHAIN 5"/>
    <property type="match status" value="1"/>
</dbReference>
<dbReference type="Pfam" id="PF00361">
    <property type="entry name" value="Proton_antipo_M"/>
    <property type="match status" value="1"/>
</dbReference>
<dbReference type="Pfam" id="PF00662">
    <property type="entry name" value="Proton_antipo_N"/>
    <property type="match status" value="1"/>
</dbReference>
<dbReference type="PRINTS" id="PR01434">
    <property type="entry name" value="NADHDHGNASE5"/>
</dbReference>
<dbReference type="PRINTS" id="PR01435">
    <property type="entry name" value="NPOXDRDTASE5"/>
</dbReference>
<gene>
    <name type="primary">ND5</name>
    <name type="synonym">NAD5</name>
</gene>
<evidence type="ECO:0000250" key="1"/>
<evidence type="ECO:0000255" key="2"/>
<evidence type="ECO:0000305" key="3"/>
<organism>
    <name type="scientific">Triticum aestivum</name>
    <name type="common">Wheat</name>
    <dbReference type="NCBI Taxonomy" id="4565"/>
    <lineage>
        <taxon>Eukaryota</taxon>
        <taxon>Viridiplantae</taxon>
        <taxon>Streptophyta</taxon>
        <taxon>Embryophyta</taxon>
        <taxon>Tracheophyta</taxon>
        <taxon>Spermatophyta</taxon>
        <taxon>Magnoliopsida</taxon>
        <taxon>Liliopsida</taxon>
        <taxon>Poales</taxon>
        <taxon>Poaceae</taxon>
        <taxon>BOP clade</taxon>
        <taxon>Pooideae</taxon>
        <taxon>Triticodae</taxon>
        <taxon>Triticeae</taxon>
        <taxon>Triticinae</taxon>
        <taxon>Triticum</taxon>
    </lineage>
</organism>
<reference key="1">
    <citation type="journal article" date="1991" name="Plant Cell">
        <title>A trans-splicing model for the expression of the tripartite nad5 gene in wheat and maize mitochondria.</title>
        <authorList>
            <person name="de Souza A.P."/>
            <person name="Jubier M.-F."/>
            <person name="Delcher E."/>
            <person name="Lancelin D."/>
            <person name="Lejeune B."/>
        </authorList>
    </citation>
    <scope>NUCLEOTIDE SEQUENCE [GENOMIC DNA]</scope>
</reference>
<geneLocation type="mitochondrion"/>
<accession>Q37680</accession>